<comment type="function">
    <text evidence="1">Splits internally a 1,3-beta-glucan molecule and transfers the newly generated reducing end (the donor) to the non-reducing end of another 1,3-beta-glucan molecule (the acceptor) forming a 1,3-beta linkage, resulting in the elongation of 1,3-beta-glucan chains in the cell wall.</text>
</comment>
<comment type="subcellular location">
    <subcellularLocation>
        <location evidence="4">Endoplasmic reticulum lumen</location>
    </subcellularLocation>
    <subcellularLocation>
        <location evidence="6">Secreted</location>
    </subcellularLocation>
</comment>
<comment type="similarity">
    <text evidence="5">Belongs to the glycosyl hydrolase 72 family.</text>
</comment>
<comment type="sequence caution" evidence="5">
    <conflict type="erroneous initiation">
        <sequence resource="EMBL-CDS" id="BAA13796"/>
    </conflict>
</comment>
<feature type="signal peptide" evidence="3">
    <location>
        <begin position="1"/>
        <end position="19"/>
    </location>
</feature>
<feature type="chain" id="PRO_0000353132" description="1,3-beta-glucanosyltransferase gas2">
    <location>
        <begin position="20"/>
        <end position="459"/>
    </location>
</feature>
<feature type="active site" description="Proton donor" evidence="1">
    <location>
        <position position="156"/>
    </location>
</feature>
<feature type="active site" description="Nucleophile" evidence="1">
    <location>
        <position position="263"/>
    </location>
</feature>
<feature type="binding site" evidence="2">
    <location>
        <position position="87"/>
    </location>
    <ligand>
        <name>(1,3-beta-D-glucosyl)n</name>
        <dbReference type="ChEBI" id="CHEBI:37671"/>
        <label>1</label>
        <note>donor substrate</note>
    </ligand>
</feature>
<feature type="binding site" evidence="2">
    <location>
        <position position="155"/>
    </location>
    <ligand>
        <name>(1,3-beta-D-glucosyl)n</name>
        <dbReference type="ChEBI" id="CHEBI:37671"/>
        <label>1</label>
        <note>donor substrate</note>
    </ligand>
</feature>
<feature type="binding site" evidence="2">
    <location>
        <position position="156"/>
    </location>
    <ligand>
        <name>(1,3-beta-D-glucosyl)n</name>
        <dbReference type="ChEBI" id="CHEBI:37671"/>
        <label>2</label>
        <note>acceptor substrate</note>
    </ligand>
</feature>
<feature type="binding site" evidence="2">
    <location>
        <position position="197"/>
    </location>
    <ligand>
        <name>(1,3-beta-D-glucosyl)n</name>
        <dbReference type="ChEBI" id="CHEBI:37671"/>
        <label>2</label>
        <note>acceptor substrate</note>
    </ligand>
</feature>
<feature type="binding site" evidence="2">
    <location>
        <position position="202"/>
    </location>
    <ligand>
        <name>(1,3-beta-D-glucosyl)n</name>
        <dbReference type="ChEBI" id="CHEBI:37671"/>
        <label>2</label>
        <note>acceptor substrate</note>
    </ligand>
</feature>
<feature type="binding site" evidence="2">
    <location>
        <position position="295"/>
    </location>
    <ligand>
        <name>(1,3-beta-D-glucosyl)n</name>
        <dbReference type="ChEBI" id="CHEBI:37671"/>
        <label>1</label>
        <note>donor substrate</note>
    </ligand>
</feature>
<feature type="glycosylation site" description="N-linked (GlcNAc...) asparagine" evidence="3">
    <location>
        <position position="34"/>
    </location>
</feature>
<feature type="glycosylation site" description="N-linked (GlcNAc...) asparagine" evidence="3">
    <location>
        <position position="68"/>
    </location>
</feature>
<feature type="glycosylation site" description="N-linked (GlcNAc...) asparagine" evidence="3">
    <location>
        <position position="90"/>
    </location>
</feature>
<feature type="glycosylation site" description="N-linked (GlcNAc...) asparagine" evidence="3">
    <location>
        <position position="104"/>
    </location>
</feature>
<feature type="glycosylation site" description="N-linked (GlcNAc...) asparagine" evidence="3">
    <location>
        <position position="146"/>
    </location>
</feature>
<feature type="glycosylation site" description="N-linked (GlcNAc...) asparagine" evidence="3">
    <location>
        <position position="160"/>
    </location>
</feature>
<feature type="glycosylation site" description="N-linked (GlcNAc...) asparagine" evidence="3">
    <location>
        <position position="212"/>
    </location>
</feature>
<feature type="glycosylation site" description="N-linked (GlcNAc...) asparagine" evidence="3">
    <location>
        <position position="218"/>
    </location>
</feature>
<feature type="glycosylation site" description="N-linked (GlcNAc...) asparagine" evidence="3">
    <location>
        <position position="254"/>
    </location>
</feature>
<feature type="glycosylation site" description="N-linked (GlcNAc...) asparagine" evidence="3">
    <location>
        <position position="284"/>
    </location>
</feature>
<feature type="glycosylation site" description="N-linked (GlcNAc...) asparagine" evidence="3">
    <location>
        <position position="308"/>
    </location>
</feature>
<feature type="glycosylation site" description="N-linked (GlcNAc...) asparagine" evidence="3">
    <location>
        <position position="334"/>
    </location>
</feature>
<feature type="glycosylation site" description="N-linked (GlcNAc...) asparagine" evidence="3">
    <location>
        <position position="344"/>
    </location>
</feature>
<feature type="glycosylation site" description="N-linked (GlcNAc...) asparagine" evidence="3">
    <location>
        <position position="354"/>
    </location>
</feature>
<feature type="glycosylation site" description="N-linked (GlcNAc...) asparagine" evidence="3">
    <location>
        <position position="370"/>
    </location>
</feature>
<feature type="glycosylation site" description="N-linked (GlcNAc...) asparagine" evidence="3">
    <location>
        <position position="423"/>
    </location>
</feature>
<feature type="disulfide bond" evidence="2">
    <location>
        <begin position="69"/>
        <end position="98"/>
    </location>
</feature>
<feature type="disulfide bond" evidence="2">
    <location>
        <begin position="211"/>
        <end position="350"/>
    </location>
</feature>
<feature type="disulfide bond" evidence="2">
    <location>
        <begin position="235"/>
        <end position="266"/>
    </location>
</feature>
<feature type="disulfide bond" evidence="2">
    <location>
        <begin position="374"/>
        <end position="427"/>
    </location>
</feature>
<feature type="disulfide bond" evidence="2">
    <location>
        <begin position="383"/>
        <end position="449"/>
    </location>
</feature>
<feature type="disulfide bond" evidence="2">
    <location>
        <begin position="402"/>
        <end position="409"/>
    </location>
</feature>
<gene>
    <name type="primary">gas2</name>
    <name type="ORF">SPBC29A10.08</name>
</gene>
<proteinExistence type="evidence at transcript level"/>
<keyword id="KW-0961">Cell wall biogenesis/degradation</keyword>
<keyword id="KW-1015">Disulfide bond</keyword>
<keyword id="KW-0256">Endoplasmic reticulum</keyword>
<keyword id="KW-0325">Glycoprotein</keyword>
<keyword id="KW-1185">Reference proteome</keyword>
<keyword id="KW-0964">Secreted</keyword>
<keyword id="KW-0732">Signal</keyword>
<keyword id="KW-0808">Transferase</keyword>
<organism>
    <name type="scientific">Schizosaccharomyces pombe (strain 972 / ATCC 24843)</name>
    <name type="common">Fission yeast</name>
    <dbReference type="NCBI Taxonomy" id="284812"/>
    <lineage>
        <taxon>Eukaryota</taxon>
        <taxon>Fungi</taxon>
        <taxon>Dikarya</taxon>
        <taxon>Ascomycota</taxon>
        <taxon>Taphrinomycotina</taxon>
        <taxon>Schizosaccharomycetes</taxon>
        <taxon>Schizosaccharomycetales</taxon>
        <taxon>Schizosaccharomycetaceae</taxon>
        <taxon>Schizosaccharomyces</taxon>
    </lineage>
</organism>
<name>GAS2_SCHPO</name>
<accession>Q9USU5</accession>
<accession>P78785</accession>
<accession>Q1L852</accession>
<sequence>MVSFTKFTLQLLSASAAFAYFEPLTIKGRKFFKNDTQFYIKGVAYQPAVDAEETSTIVDPLAEVNYKNCTEDAKIISNLGANVIRVYAVNASLNHDKCMEAFRNESIYVFLDLANPKTGIDRDTPTWNTDQFSSYQSVIDTFQKYNNTGAFFAGNEVVNNASNAPAVAYVRAAVRDSKNYIKSKKYRTIPVGYAGADIPVVRTELAAYLSCNATKLNNDTNSETDFLGYNMYEWCGHSDFYTSGYAARTQELENFTIPIFLSEFGCNKVTPRVFTEVQAIYSDNMTNVWSGGIVYEYSQEVNDYGLVNVSSTGERVLTTDYNNLKKQWASISPNITYKHSYNPNGTIPECPSRNKTSWAVSANAFPVTPNTTICSNAVKNLKCSANGTPSGSKISQVLSELCYYDNKACSSISSDPYEGTYGNYTGCTGVQQLSIALNAYTQDHGADSCSWGGVGELKA</sequence>
<dbReference type="EC" id="2.4.1.-"/>
<dbReference type="EMBL" id="D89134">
    <property type="protein sequence ID" value="BAA13796.1"/>
    <property type="status" value="ALT_INIT"/>
    <property type="molecule type" value="mRNA"/>
</dbReference>
<dbReference type="EMBL" id="CU329671">
    <property type="protein sequence ID" value="CAA22436.1"/>
    <property type="molecule type" value="Genomic_DNA"/>
</dbReference>
<dbReference type="PIR" id="T40063">
    <property type="entry name" value="T40063"/>
</dbReference>
<dbReference type="RefSeq" id="NP_596053.1">
    <property type="nucleotide sequence ID" value="NM_001021964.2"/>
</dbReference>
<dbReference type="SMR" id="Q9USU5"/>
<dbReference type="BioGRID" id="276818">
    <property type="interactions" value="4"/>
</dbReference>
<dbReference type="FunCoup" id="Q9USU5">
    <property type="interactions" value="66"/>
</dbReference>
<dbReference type="STRING" id="284812.Q9USU5"/>
<dbReference type="CAZy" id="CBM43">
    <property type="family name" value="Carbohydrate-Binding Module Family 43"/>
</dbReference>
<dbReference type="CAZy" id="GH72">
    <property type="family name" value="Glycoside Hydrolase Family 72"/>
</dbReference>
<dbReference type="GlyCosmos" id="Q9USU5">
    <property type="glycosylation" value="16 sites, No reported glycans"/>
</dbReference>
<dbReference type="iPTMnet" id="Q9USU5"/>
<dbReference type="PaxDb" id="4896-SPBC29A10.08.1"/>
<dbReference type="EnsemblFungi" id="SPBC29A10.08.1">
    <property type="protein sequence ID" value="SPBC29A10.08.1:pep"/>
    <property type="gene ID" value="SPBC29A10.08"/>
</dbReference>
<dbReference type="GeneID" id="2540287"/>
<dbReference type="KEGG" id="spo:2540287"/>
<dbReference type="PomBase" id="SPBC29A10.08">
    <property type="gene designation" value="gas2"/>
</dbReference>
<dbReference type="VEuPathDB" id="FungiDB:SPBC29A10.08"/>
<dbReference type="eggNOG" id="ENOG502QPST">
    <property type="taxonomic scope" value="Eukaryota"/>
</dbReference>
<dbReference type="HOGENOM" id="CLU_021855_2_1_1"/>
<dbReference type="InParanoid" id="Q9USU5"/>
<dbReference type="OMA" id="DGACECM"/>
<dbReference type="PhylomeDB" id="Q9USU5"/>
<dbReference type="PRO" id="PR:Q9USU5"/>
<dbReference type="Proteomes" id="UP000002485">
    <property type="component" value="Chromosome II"/>
</dbReference>
<dbReference type="GO" id="GO:0071944">
    <property type="term" value="C:cell periphery"/>
    <property type="evidence" value="ECO:0000314"/>
    <property type="project" value="BHF-UCL"/>
</dbReference>
<dbReference type="GO" id="GO:0043188">
    <property type="term" value="C:cell septum edging"/>
    <property type="evidence" value="ECO:0000314"/>
    <property type="project" value="BHF-UCL"/>
</dbReference>
<dbReference type="GO" id="GO:0051286">
    <property type="term" value="C:cell tip"/>
    <property type="evidence" value="ECO:0000314"/>
    <property type="project" value="PomBase"/>
</dbReference>
<dbReference type="GO" id="GO:0005788">
    <property type="term" value="C:endoplasmic reticulum lumen"/>
    <property type="evidence" value="ECO:0007669"/>
    <property type="project" value="UniProtKB-SubCell"/>
</dbReference>
<dbReference type="GO" id="GO:0009897">
    <property type="term" value="C:external side of plasma membrane"/>
    <property type="evidence" value="ECO:0000304"/>
    <property type="project" value="PomBase"/>
</dbReference>
<dbReference type="GO" id="GO:0005576">
    <property type="term" value="C:extracellular region"/>
    <property type="evidence" value="ECO:0000314"/>
    <property type="project" value="PomBase"/>
</dbReference>
<dbReference type="GO" id="GO:0009277">
    <property type="term" value="C:fungal-type cell wall"/>
    <property type="evidence" value="ECO:0000318"/>
    <property type="project" value="GO_Central"/>
</dbReference>
<dbReference type="GO" id="GO:0000936">
    <property type="term" value="C:primary cell septum"/>
    <property type="evidence" value="ECO:0000314"/>
    <property type="project" value="BHF-UCL"/>
</dbReference>
<dbReference type="GO" id="GO:0030427">
    <property type="term" value="C:site of polarized growth"/>
    <property type="evidence" value="ECO:0000314"/>
    <property type="project" value="BHF-UCL"/>
</dbReference>
<dbReference type="GO" id="GO:0042124">
    <property type="term" value="F:1,3-beta-glucanosyltransferase activity"/>
    <property type="evidence" value="ECO:0000314"/>
    <property type="project" value="BHF-UCL"/>
</dbReference>
<dbReference type="GO" id="GO:0006074">
    <property type="term" value="P:(1-&gt;3)-beta-D-glucan metabolic process"/>
    <property type="evidence" value="ECO:0000314"/>
    <property type="project" value="BHF-UCL"/>
</dbReference>
<dbReference type="GO" id="GO:0071970">
    <property type="term" value="P:fungal-type cell wall (1-&gt;3)-beta-D-glucan biosynthetic process"/>
    <property type="evidence" value="ECO:0000314"/>
    <property type="project" value="PomBase"/>
</dbReference>
<dbReference type="GO" id="GO:0031505">
    <property type="term" value="P:fungal-type cell wall organization"/>
    <property type="evidence" value="ECO:0000318"/>
    <property type="project" value="GO_Central"/>
</dbReference>
<dbReference type="FunFam" id="3.20.20.80:FF:000038">
    <property type="entry name" value="1,3-beta-glucanosyltransferase"/>
    <property type="match status" value="1"/>
</dbReference>
<dbReference type="Gene3D" id="1.20.58.1040">
    <property type="match status" value="1"/>
</dbReference>
<dbReference type="Gene3D" id="3.20.20.80">
    <property type="entry name" value="Glycosidases"/>
    <property type="match status" value="1"/>
</dbReference>
<dbReference type="InterPro" id="IPR004886">
    <property type="entry name" value="Glucanosyltransferase"/>
</dbReference>
<dbReference type="InterPro" id="IPR017853">
    <property type="entry name" value="Glycoside_hydrolase_SF"/>
</dbReference>
<dbReference type="InterPro" id="IPR012946">
    <property type="entry name" value="X8"/>
</dbReference>
<dbReference type="PANTHER" id="PTHR31468">
    <property type="entry name" value="1,3-BETA-GLUCANOSYLTRANSFERASE GAS1"/>
    <property type="match status" value="1"/>
</dbReference>
<dbReference type="PANTHER" id="PTHR31468:SF8">
    <property type="entry name" value="1,3-BETA-GLUCANOSYLTRANSFERASE GAS2"/>
    <property type="match status" value="1"/>
</dbReference>
<dbReference type="Pfam" id="PF03198">
    <property type="entry name" value="Glyco_hydro_72"/>
    <property type="match status" value="1"/>
</dbReference>
<dbReference type="Pfam" id="PF07983">
    <property type="entry name" value="X8"/>
    <property type="match status" value="1"/>
</dbReference>
<dbReference type="SMART" id="SM00768">
    <property type="entry name" value="X8"/>
    <property type="match status" value="1"/>
</dbReference>
<dbReference type="SUPFAM" id="SSF51445">
    <property type="entry name" value="(Trans)glycosidases"/>
    <property type="match status" value="1"/>
</dbReference>
<protein>
    <recommendedName>
        <fullName>1,3-beta-glucanosyltransferase gas2</fullName>
        <ecNumber>2.4.1.-</ecNumber>
    </recommendedName>
</protein>
<reference key="1">
    <citation type="journal article" date="1997" name="DNA Res.">
        <title>Identification of open reading frames in Schizosaccharomyces pombe cDNAs.</title>
        <authorList>
            <person name="Yoshioka S."/>
            <person name="Kato K."/>
            <person name="Nakai K."/>
            <person name="Okayama H."/>
            <person name="Nojima H."/>
        </authorList>
    </citation>
    <scope>NUCLEOTIDE SEQUENCE [MRNA]</scope>
</reference>
<reference key="2">
    <citation type="journal article" date="2002" name="Nature">
        <title>The genome sequence of Schizosaccharomyces pombe.</title>
        <authorList>
            <person name="Wood V."/>
            <person name="Gwilliam R."/>
            <person name="Rajandream M.A."/>
            <person name="Lyne M.H."/>
            <person name="Lyne R."/>
            <person name="Stewart A."/>
            <person name="Sgouros J.G."/>
            <person name="Peat N."/>
            <person name="Hayles J."/>
            <person name="Baker S.G."/>
            <person name="Basham D."/>
            <person name="Bowman S."/>
            <person name="Brooks K."/>
            <person name="Brown D."/>
            <person name="Brown S."/>
            <person name="Chillingworth T."/>
            <person name="Churcher C.M."/>
            <person name="Collins M."/>
            <person name="Connor R."/>
            <person name="Cronin A."/>
            <person name="Davis P."/>
            <person name="Feltwell T."/>
            <person name="Fraser A."/>
            <person name="Gentles S."/>
            <person name="Goble A."/>
            <person name="Hamlin N."/>
            <person name="Harris D.E."/>
            <person name="Hidalgo J."/>
            <person name="Hodgson G."/>
            <person name="Holroyd S."/>
            <person name="Hornsby T."/>
            <person name="Howarth S."/>
            <person name="Huckle E.J."/>
            <person name="Hunt S."/>
            <person name="Jagels K."/>
            <person name="James K.D."/>
            <person name="Jones L."/>
            <person name="Jones M."/>
            <person name="Leather S."/>
            <person name="McDonald S."/>
            <person name="McLean J."/>
            <person name="Mooney P."/>
            <person name="Moule S."/>
            <person name="Mungall K.L."/>
            <person name="Murphy L.D."/>
            <person name="Niblett D."/>
            <person name="Odell C."/>
            <person name="Oliver K."/>
            <person name="O'Neil S."/>
            <person name="Pearson D."/>
            <person name="Quail M.A."/>
            <person name="Rabbinowitsch E."/>
            <person name="Rutherford K.M."/>
            <person name="Rutter S."/>
            <person name="Saunders D."/>
            <person name="Seeger K."/>
            <person name="Sharp S."/>
            <person name="Skelton J."/>
            <person name="Simmonds M.N."/>
            <person name="Squares R."/>
            <person name="Squares S."/>
            <person name="Stevens K."/>
            <person name="Taylor K."/>
            <person name="Taylor R.G."/>
            <person name="Tivey A."/>
            <person name="Walsh S.V."/>
            <person name="Warren T."/>
            <person name="Whitehead S."/>
            <person name="Woodward J.R."/>
            <person name="Volckaert G."/>
            <person name="Aert R."/>
            <person name="Robben J."/>
            <person name="Grymonprez B."/>
            <person name="Weltjens I."/>
            <person name="Vanstreels E."/>
            <person name="Rieger M."/>
            <person name="Schaefer M."/>
            <person name="Mueller-Auer S."/>
            <person name="Gabel C."/>
            <person name="Fuchs M."/>
            <person name="Duesterhoeft A."/>
            <person name="Fritzc C."/>
            <person name="Holzer E."/>
            <person name="Moestl D."/>
            <person name="Hilbert H."/>
            <person name="Borzym K."/>
            <person name="Langer I."/>
            <person name="Beck A."/>
            <person name="Lehrach H."/>
            <person name="Reinhardt R."/>
            <person name="Pohl T.M."/>
            <person name="Eger P."/>
            <person name="Zimmermann W."/>
            <person name="Wedler H."/>
            <person name="Wambutt R."/>
            <person name="Purnelle B."/>
            <person name="Goffeau A."/>
            <person name="Cadieu E."/>
            <person name="Dreano S."/>
            <person name="Gloux S."/>
            <person name="Lelaure V."/>
            <person name="Mottier S."/>
            <person name="Galibert F."/>
            <person name="Aves S.J."/>
            <person name="Xiang Z."/>
            <person name="Hunt C."/>
            <person name="Moore K."/>
            <person name="Hurst S.M."/>
            <person name="Lucas M."/>
            <person name="Rochet M."/>
            <person name="Gaillardin C."/>
            <person name="Tallada V.A."/>
            <person name="Garzon A."/>
            <person name="Thode G."/>
            <person name="Daga R.R."/>
            <person name="Cruzado L."/>
            <person name="Jimenez J."/>
            <person name="Sanchez M."/>
            <person name="del Rey F."/>
            <person name="Benito J."/>
            <person name="Dominguez A."/>
            <person name="Revuelta J.L."/>
            <person name="Moreno S."/>
            <person name="Armstrong J."/>
            <person name="Forsburg S.L."/>
            <person name="Cerutti L."/>
            <person name="Lowe T."/>
            <person name="McCombie W.R."/>
            <person name="Paulsen I."/>
            <person name="Potashkin J."/>
            <person name="Shpakovski G.V."/>
            <person name="Ussery D."/>
            <person name="Barrell B.G."/>
            <person name="Nurse P."/>
        </authorList>
    </citation>
    <scope>NUCLEOTIDE SEQUENCE [LARGE SCALE GENOMIC DNA]</scope>
    <source>
        <strain>972 / ATCC 24843</strain>
    </source>
</reference>
<reference key="3">
    <citation type="journal article" date="2006" name="Nat. Biotechnol.">
        <title>ORFeome cloning and global analysis of protein localization in the fission yeast Schizosaccharomyces pombe.</title>
        <authorList>
            <person name="Matsuyama A."/>
            <person name="Arai R."/>
            <person name="Yashiroda Y."/>
            <person name="Shirai A."/>
            <person name="Kamata A."/>
            <person name="Sekido S."/>
            <person name="Kobayashi Y."/>
            <person name="Hashimoto A."/>
            <person name="Hamamoto M."/>
            <person name="Hiraoka Y."/>
            <person name="Horinouchi S."/>
            <person name="Yoshida M."/>
        </authorList>
    </citation>
    <scope>SUBCELLULAR LOCATION [LARGE SCALE ANALYSIS]</scope>
</reference>
<evidence type="ECO:0000250" key="1"/>
<evidence type="ECO:0000250" key="2">
    <source>
        <dbReference type="UniProtKB" id="Q06135"/>
    </source>
</evidence>
<evidence type="ECO:0000255" key="3"/>
<evidence type="ECO:0000269" key="4">
    <source>
    </source>
</evidence>
<evidence type="ECO:0000305" key="5"/>
<evidence type="ECO:0000305" key="6">
    <source>
    </source>
</evidence>